<name>Y952_HALH5</name>
<organism>
    <name type="scientific">Halalkalibacterium halodurans (strain ATCC BAA-125 / DSM 18197 / FERM 7344 / JCM 9153 / C-125)</name>
    <name type="common">Bacillus halodurans</name>
    <dbReference type="NCBI Taxonomy" id="272558"/>
    <lineage>
        <taxon>Bacteria</taxon>
        <taxon>Bacillati</taxon>
        <taxon>Bacillota</taxon>
        <taxon>Bacilli</taxon>
        <taxon>Bacillales</taxon>
        <taxon>Bacillaceae</taxon>
        <taxon>Halalkalibacterium (ex Joshi et al. 2022)</taxon>
    </lineage>
</organism>
<gene>
    <name type="ordered locus">BH0952</name>
</gene>
<evidence type="ECO:0000255" key="1">
    <source>
        <dbReference type="HAMAP-Rule" id="MF_01502"/>
    </source>
</evidence>
<evidence type="ECO:0000305" key="2"/>
<dbReference type="EMBL" id="AB031215">
    <property type="protein sequence ID" value="BAA90861.1"/>
    <property type="status" value="ALT_INIT"/>
    <property type="molecule type" value="Genomic_DNA"/>
</dbReference>
<dbReference type="EMBL" id="BA000004">
    <property type="protein sequence ID" value="BAB04671.1"/>
    <property type="molecule type" value="Genomic_DNA"/>
</dbReference>
<dbReference type="PIR" id="H83768">
    <property type="entry name" value="H83768"/>
</dbReference>
<dbReference type="RefSeq" id="WP_010897124.1">
    <property type="nucleotide sequence ID" value="NC_002570.2"/>
</dbReference>
<dbReference type="SMR" id="Q9KEA2"/>
<dbReference type="STRING" id="272558.gene:10726826"/>
<dbReference type="KEGG" id="bha:BH0952"/>
<dbReference type="eggNOG" id="ENOG50313Y4">
    <property type="taxonomic scope" value="Bacteria"/>
</dbReference>
<dbReference type="HOGENOM" id="CLU_143991_0_0_9"/>
<dbReference type="OrthoDB" id="1653848at2"/>
<dbReference type="Proteomes" id="UP000001258">
    <property type="component" value="Chromosome"/>
</dbReference>
<dbReference type="GO" id="GO:0005886">
    <property type="term" value="C:plasma membrane"/>
    <property type="evidence" value="ECO:0007669"/>
    <property type="project" value="UniProtKB-SubCell"/>
</dbReference>
<dbReference type="HAMAP" id="MF_01502">
    <property type="entry name" value="UPF0295"/>
    <property type="match status" value="1"/>
</dbReference>
<dbReference type="InterPro" id="IPR020912">
    <property type="entry name" value="UPF0295"/>
</dbReference>
<dbReference type="NCBIfam" id="NF002796">
    <property type="entry name" value="PRK02935.1"/>
    <property type="match status" value="1"/>
</dbReference>
<dbReference type="Pfam" id="PF11023">
    <property type="entry name" value="DUF2614"/>
    <property type="match status" value="1"/>
</dbReference>
<sequence length="121" mass="13622">MGIKYSNKINKIRTFALSLVFLGILVMYIGIFFRTHEVIMVLAMILGFLCIIASTAVYFWIGMISTRAIPVVCPECGKPTKVLGRVDACMHCDQPLTLDRSLEGKEFDEKYNLKGKKRVDG</sequence>
<protein>
    <recommendedName>
        <fullName evidence="1">UPF0295 protein BH0952</fullName>
    </recommendedName>
</protein>
<feature type="chain" id="PRO_0000053851" description="UPF0295 protein BH0952">
    <location>
        <begin position="1"/>
        <end position="121"/>
    </location>
</feature>
<feature type="transmembrane region" description="Helical" evidence="1">
    <location>
        <begin position="12"/>
        <end position="32"/>
    </location>
</feature>
<feature type="transmembrane region" description="Helical" evidence="1">
    <location>
        <begin position="41"/>
        <end position="61"/>
    </location>
</feature>
<accession>Q9KEA2</accession>
<accession>Q9LC90</accession>
<reference key="1">
    <citation type="journal article" date="2000" name="Extremophiles">
        <title>Characterization and comparative study of the rrn operons of alkaliphilic Bacillus halodurans C-125.</title>
        <authorList>
            <person name="Nakasone K."/>
            <person name="Masui N."/>
            <person name="Takaki Y."/>
            <person name="Sasaki R."/>
            <person name="Maeno G."/>
            <person name="Sakiyama T."/>
            <person name="Hirama C."/>
            <person name="Fuji F."/>
            <person name="Takami H."/>
        </authorList>
    </citation>
    <scope>NUCLEOTIDE SEQUENCE [GENOMIC DNA]</scope>
    <source>
        <strain>ATCC BAA-125 / DSM 18197 / FERM 7344 / JCM 9153 / C-125</strain>
    </source>
</reference>
<reference key="2">
    <citation type="journal article" date="2000" name="Nucleic Acids Res.">
        <title>Complete genome sequence of the alkaliphilic bacterium Bacillus halodurans and genomic sequence comparison with Bacillus subtilis.</title>
        <authorList>
            <person name="Takami H."/>
            <person name="Nakasone K."/>
            <person name="Takaki Y."/>
            <person name="Maeno G."/>
            <person name="Sasaki R."/>
            <person name="Masui N."/>
            <person name="Fuji F."/>
            <person name="Hirama C."/>
            <person name="Nakamura Y."/>
            <person name="Ogasawara N."/>
            <person name="Kuhara S."/>
            <person name="Horikoshi K."/>
        </authorList>
    </citation>
    <scope>NUCLEOTIDE SEQUENCE [LARGE SCALE GENOMIC DNA]</scope>
    <source>
        <strain>ATCC BAA-125 / DSM 18197 / FERM 7344 / JCM 9153 / C-125</strain>
    </source>
</reference>
<comment type="subcellular location">
    <subcellularLocation>
        <location evidence="1">Cell membrane</location>
        <topology evidence="1">Multi-pass membrane protein</topology>
    </subcellularLocation>
</comment>
<comment type="similarity">
    <text evidence="1">Belongs to the UPF0295 family.</text>
</comment>
<comment type="sequence caution" evidence="2">
    <conflict type="erroneous initiation">
        <sequence resource="EMBL-CDS" id="BAA90861"/>
    </conflict>
</comment>
<keyword id="KW-1003">Cell membrane</keyword>
<keyword id="KW-0472">Membrane</keyword>
<keyword id="KW-1185">Reference proteome</keyword>
<keyword id="KW-0812">Transmembrane</keyword>
<keyword id="KW-1133">Transmembrane helix</keyword>
<proteinExistence type="inferred from homology"/>